<accession>Q2VEC8</accession>
<reference key="1">
    <citation type="journal article" date="2006" name="Plant Cell Rep.">
        <title>The complete chloroplast genome sequences of Solanum tuberosum and comparative analysis with Solanaceae species identified the presence of a 241-bp deletion in cultivated potato chloroplast DNA sequence.</title>
        <authorList>
            <person name="Chung H.-J."/>
            <person name="Jung J.D."/>
            <person name="Park H.-W."/>
            <person name="Kim J.-H."/>
            <person name="Cha H.W."/>
            <person name="Min S.R."/>
            <person name="Jeong W.-J."/>
            <person name="Liu J.R."/>
        </authorList>
    </citation>
    <scope>NUCLEOTIDE SEQUENCE [LARGE SCALE GENOMIC DNA]</scope>
    <source>
        <strain>cv. Desiree</strain>
    </source>
</reference>
<reference key="2">
    <citation type="submission" date="2006-02" db="EMBL/GenBank/DDBJ databases">
        <title>Complete chloroplast genome sequences of Solanum tuberosum cultivar Desiree and comparative analyses with other Solanaceae genomes.</title>
        <authorList>
            <person name="Gargano D."/>
            <person name="Scotti N."/>
            <person name="Vezzi A."/>
            <person name="Bilardi A."/>
            <person name="Valle G."/>
            <person name="Grillo S."/>
            <person name="Cardi T."/>
        </authorList>
    </citation>
    <scope>NUCLEOTIDE SEQUENCE [LARGE SCALE GENOMIC DNA]</scope>
    <source>
        <strain>cv. Desiree</strain>
    </source>
</reference>
<sequence>MILEHVLVLSAYLFSIGIYGLITSRNMVRALMCLELILNAVNINFVTFSDFFDNRQLKGDIFSIFVIAIAAAEAAIGLAIVSSIYRNRKSTRINQSNLLNN</sequence>
<name>NU4LC_SOLTU</name>
<comment type="function">
    <text evidence="1">NDH shuttles electrons from NAD(P)H:plastoquinone, via FMN and iron-sulfur (Fe-S) centers, to quinones in the photosynthetic chain and possibly in a chloroplast respiratory chain. The immediate electron acceptor for the enzyme in this species is believed to be plastoquinone. Couples the redox reaction to proton translocation, and thus conserves the redox energy in a proton gradient.</text>
</comment>
<comment type="catalytic activity">
    <reaction evidence="1">
        <text>a plastoquinone + NADH + (n+1) H(+)(in) = a plastoquinol + NAD(+) + n H(+)(out)</text>
        <dbReference type="Rhea" id="RHEA:42608"/>
        <dbReference type="Rhea" id="RHEA-COMP:9561"/>
        <dbReference type="Rhea" id="RHEA-COMP:9562"/>
        <dbReference type="ChEBI" id="CHEBI:15378"/>
        <dbReference type="ChEBI" id="CHEBI:17757"/>
        <dbReference type="ChEBI" id="CHEBI:57540"/>
        <dbReference type="ChEBI" id="CHEBI:57945"/>
        <dbReference type="ChEBI" id="CHEBI:62192"/>
    </reaction>
</comment>
<comment type="catalytic activity">
    <reaction evidence="1">
        <text>a plastoquinone + NADPH + (n+1) H(+)(in) = a plastoquinol + NADP(+) + n H(+)(out)</text>
        <dbReference type="Rhea" id="RHEA:42612"/>
        <dbReference type="Rhea" id="RHEA-COMP:9561"/>
        <dbReference type="Rhea" id="RHEA-COMP:9562"/>
        <dbReference type="ChEBI" id="CHEBI:15378"/>
        <dbReference type="ChEBI" id="CHEBI:17757"/>
        <dbReference type="ChEBI" id="CHEBI:57783"/>
        <dbReference type="ChEBI" id="CHEBI:58349"/>
        <dbReference type="ChEBI" id="CHEBI:62192"/>
    </reaction>
</comment>
<comment type="subunit">
    <text evidence="1">NDH is composed of at least 16 different subunits, 5 of which are encoded in the nucleus.</text>
</comment>
<comment type="subcellular location">
    <subcellularLocation>
        <location evidence="1">Plastid</location>
        <location evidence="1">Chloroplast thylakoid membrane</location>
        <topology evidence="1">Multi-pass membrane protein</topology>
    </subcellularLocation>
</comment>
<comment type="similarity">
    <text evidence="1">Belongs to the complex I subunit 4L family.</text>
</comment>
<proteinExistence type="inferred from homology"/>
<keyword id="KW-0150">Chloroplast</keyword>
<keyword id="KW-0472">Membrane</keyword>
<keyword id="KW-0520">NAD</keyword>
<keyword id="KW-0521">NADP</keyword>
<keyword id="KW-0934">Plastid</keyword>
<keyword id="KW-0618">Plastoquinone</keyword>
<keyword id="KW-0874">Quinone</keyword>
<keyword id="KW-1185">Reference proteome</keyword>
<keyword id="KW-0793">Thylakoid</keyword>
<keyword id="KW-1278">Translocase</keyword>
<keyword id="KW-0812">Transmembrane</keyword>
<keyword id="KW-1133">Transmembrane helix</keyword>
<keyword id="KW-0813">Transport</keyword>
<geneLocation type="chloroplast"/>
<gene>
    <name evidence="1" type="primary">ndhE</name>
</gene>
<organism>
    <name type="scientific">Solanum tuberosum</name>
    <name type="common">Potato</name>
    <dbReference type="NCBI Taxonomy" id="4113"/>
    <lineage>
        <taxon>Eukaryota</taxon>
        <taxon>Viridiplantae</taxon>
        <taxon>Streptophyta</taxon>
        <taxon>Embryophyta</taxon>
        <taxon>Tracheophyta</taxon>
        <taxon>Spermatophyta</taxon>
        <taxon>Magnoliopsida</taxon>
        <taxon>eudicotyledons</taxon>
        <taxon>Gunneridae</taxon>
        <taxon>Pentapetalae</taxon>
        <taxon>asterids</taxon>
        <taxon>lamiids</taxon>
        <taxon>Solanales</taxon>
        <taxon>Solanaceae</taxon>
        <taxon>Solanoideae</taxon>
        <taxon>Solaneae</taxon>
        <taxon>Solanum</taxon>
    </lineage>
</organism>
<feature type="chain" id="PRO_0000277575" description="NAD(P)H-quinone oxidoreductase subunit 4L, chloroplastic">
    <location>
        <begin position="1"/>
        <end position="101"/>
    </location>
</feature>
<feature type="transmembrane region" description="Helical" evidence="1">
    <location>
        <begin position="2"/>
        <end position="22"/>
    </location>
</feature>
<feature type="transmembrane region" description="Helical" evidence="1">
    <location>
        <begin position="32"/>
        <end position="52"/>
    </location>
</feature>
<feature type="transmembrane region" description="Helical" evidence="1">
    <location>
        <begin position="61"/>
        <end position="81"/>
    </location>
</feature>
<dbReference type="EC" id="7.1.1.-" evidence="1"/>
<dbReference type="EMBL" id="DQ231562">
    <property type="protein sequence ID" value="ABB90090.1"/>
    <property type="molecule type" value="Genomic_DNA"/>
</dbReference>
<dbReference type="EMBL" id="DQ386163">
    <property type="protein sequence ID" value="ABD47109.1"/>
    <property type="molecule type" value="Genomic_DNA"/>
</dbReference>
<dbReference type="RefSeq" id="YP_635691.1">
    <property type="nucleotide sequence ID" value="NC_008096.2"/>
</dbReference>
<dbReference type="SMR" id="Q2VEC8"/>
<dbReference type="FunCoup" id="Q2VEC8">
    <property type="interactions" value="54"/>
</dbReference>
<dbReference type="STRING" id="4113.Q2VEC8"/>
<dbReference type="PaxDb" id="4113-PGSC0003DMT400029490"/>
<dbReference type="EnsemblPlants" id="PGSC0003DMT400029490">
    <property type="protein sequence ID" value="PGSC0003DMT400029490"/>
    <property type="gene ID" value="PGSC0003DMG402011339"/>
</dbReference>
<dbReference type="GeneID" id="4099907"/>
<dbReference type="Gramene" id="PGSC0003DMT400029490">
    <property type="protein sequence ID" value="PGSC0003DMT400029490"/>
    <property type="gene ID" value="PGSC0003DMG402011339"/>
</dbReference>
<dbReference type="KEGG" id="sot:4099907"/>
<dbReference type="eggNOG" id="KOG4669">
    <property type="taxonomic scope" value="Eukaryota"/>
</dbReference>
<dbReference type="HOGENOM" id="CLU_144724_1_1_1"/>
<dbReference type="InParanoid" id="Q2VEC8"/>
<dbReference type="OMA" id="FDVWLSR"/>
<dbReference type="OrthoDB" id="1925110at2759"/>
<dbReference type="Proteomes" id="UP000011115">
    <property type="component" value="Unassembled WGS sequence"/>
</dbReference>
<dbReference type="GO" id="GO:0009535">
    <property type="term" value="C:chloroplast thylakoid membrane"/>
    <property type="evidence" value="ECO:0007669"/>
    <property type="project" value="UniProtKB-SubCell"/>
</dbReference>
<dbReference type="GO" id="GO:0030964">
    <property type="term" value="C:NADH dehydrogenase complex"/>
    <property type="evidence" value="ECO:0000318"/>
    <property type="project" value="GO_Central"/>
</dbReference>
<dbReference type="GO" id="GO:0016655">
    <property type="term" value="F:oxidoreductase activity, acting on NAD(P)H, quinone or similar compound as acceptor"/>
    <property type="evidence" value="ECO:0007669"/>
    <property type="project" value="UniProtKB-UniRule"/>
</dbReference>
<dbReference type="GO" id="GO:0048038">
    <property type="term" value="F:quinone binding"/>
    <property type="evidence" value="ECO:0007669"/>
    <property type="project" value="UniProtKB-KW"/>
</dbReference>
<dbReference type="GO" id="GO:0042773">
    <property type="term" value="P:ATP synthesis coupled electron transport"/>
    <property type="evidence" value="ECO:0007669"/>
    <property type="project" value="InterPro"/>
</dbReference>
<dbReference type="GO" id="GO:0019684">
    <property type="term" value="P:photosynthesis, light reaction"/>
    <property type="evidence" value="ECO:0007669"/>
    <property type="project" value="UniProtKB-UniRule"/>
</dbReference>
<dbReference type="FunFam" id="1.10.287.3510:FF:000001">
    <property type="entry name" value="NADH-quinone oxidoreductase subunit K"/>
    <property type="match status" value="1"/>
</dbReference>
<dbReference type="Gene3D" id="1.10.287.3510">
    <property type="match status" value="1"/>
</dbReference>
<dbReference type="HAMAP" id="MF_01456">
    <property type="entry name" value="NDH1_NuoK"/>
    <property type="match status" value="1"/>
</dbReference>
<dbReference type="InterPro" id="IPR001133">
    <property type="entry name" value="NADH_UbQ_OxRdtase_chain4L/K"/>
</dbReference>
<dbReference type="InterPro" id="IPR039428">
    <property type="entry name" value="NUOK/Mnh_C1-like"/>
</dbReference>
<dbReference type="NCBIfam" id="NF004320">
    <property type="entry name" value="PRK05715.1-2"/>
    <property type="match status" value="1"/>
</dbReference>
<dbReference type="NCBIfam" id="NF004322">
    <property type="entry name" value="PRK05715.1-4"/>
    <property type="match status" value="1"/>
</dbReference>
<dbReference type="NCBIfam" id="NF004323">
    <property type="entry name" value="PRK05715.1-5"/>
    <property type="match status" value="1"/>
</dbReference>
<dbReference type="PANTHER" id="PTHR11434:SF16">
    <property type="entry name" value="NADH-UBIQUINONE OXIDOREDUCTASE CHAIN 4L"/>
    <property type="match status" value="1"/>
</dbReference>
<dbReference type="PANTHER" id="PTHR11434">
    <property type="entry name" value="NADH-UBIQUINONE OXIDOREDUCTASE SUBUNIT ND4L"/>
    <property type="match status" value="1"/>
</dbReference>
<dbReference type="Pfam" id="PF00420">
    <property type="entry name" value="Oxidored_q2"/>
    <property type="match status" value="1"/>
</dbReference>
<protein>
    <recommendedName>
        <fullName evidence="1">NAD(P)H-quinone oxidoreductase subunit 4L, chloroplastic</fullName>
        <ecNumber evidence="1">7.1.1.-</ecNumber>
    </recommendedName>
    <alternativeName>
        <fullName evidence="1">NAD(P)H dehydrogenase subunit 4L</fullName>
    </alternativeName>
    <alternativeName>
        <fullName evidence="1">NADH-plastoquinone oxidoreductase subunit 4L</fullName>
    </alternativeName>
</protein>
<evidence type="ECO:0000255" key="1">
    <source>
        <dbReference type="HAMAP-Rule" id="MF_01456"/>
    </source>
</evidence>